<dbReference type="EMBL" id="Y09476">
    <property type="protein sequence ID" value="CAA70642.1"/>
    <property type="molecule type" value="Genomic_DNA"/>
</dbReference>
<dbReference type="EMBL" id="AL009126">
    <property type="protein sequence ID" value="CAB12918.1"/>
    <property type="molecule type" value="Genomic_DNA"/>
</dbReference>
<dbReference type="EMBL" id="Z93940">
    <property type="protein sequence ID" value="CAB07964.1"/>
    <property type="molecule type" value="Genomic_DNA"/>
</dbReference>
<dbReference type="PIR" id="E69837">
    <property type="entry name" value="E69837"/>
</dbReference>
<dbReference type="RefSeq" id="NP_388959.1">
    <property type="nucleotide sequence ID" value="NC_000964.3"/>
</dbReference>
<dbReference type="RefSeq" id="WP_010886469.1">
    <property type="nucleotide sequence ID" value="NZ_OZ025638.1"/>
</dbReference>
<dbReference type="FunCoup" id="O06727">
    <property type="interactions" value="159"/>
</dbReference>
<dbReference type="IntAct" id="O06727">
    <property type="interactions" value="3"/>
</dbReference>
<dbReference type="STRING" id="224308.BSU10780"/>
<dbReference type="PaxDb" id="224308-BSU10780"/>
<dbReference type="DNASU" id="936354"/>
<dbReference type="EnsemblBacteria" id="CAB12918">
    <property type="protein sequence ID" value="CAB12918"/>
    <property type="gene ID" value="BSU_10780"/>
</dbReference>
<dbReference type="GeneID" id="936354"/>
<dbReference type="KEGG" id="bsu:BSU10780"/>
<dbReference type="PATRIC" id="fig|224308.43.peg.1124"/>
<dbReference type="eggNOG" id="ENOG5032ZT1">
    <property type="taxonomic scope" value="Bacteria"/>
</dbReference>
<dbReference type="InParanoid" id="O06727"/>
<dbReference type="OrthoDB" id="2923064at2"/>
<dbReference type="BioCyc" id="BSUB:BSU10780-MONOMER"/>
<dbReference type="Proteomes" id="UP000001570">
    <property type="component" value="Chromosome"/>
</dbReference>
<dbReference type="InterPro" id="IPR024488">
    <property type="entry name" value="DUF2777"/>
</dbReference>
<dbReference type="Pfam" id="PF10949">
    <property type="entry name" value="DUF2777"/>
    <property type="match status" value="1"/>
</dbReference>
<keyword id="KW-1185">Reference proteome</keyword>
<name>YISN_BACSU</name>
<evidence type="ECO:0000305" key="1"/>
<organism>
    <name type="scientific">Bacillus subtilis (strain 168)</name>
    <dbReference type="NCBI Taxonomy" id="224308"/>
    <lineage>
        <taxon>Bacteria</taxon>
        <taxon>Bacillati</taxon>
        <taxon>Bacillota</taxon>
        <taxon>Bacilli</taxon>
        <taxon>Bacillales</taxon>
        <taxon>Bacillaceae</taxon>
        <taxon>Bacillus</taxon>
    </lineage>
</organism>
<reference key="1">
    <citation type="journal article" date="1997" name="Microbiology">
        <title>Sequencing of regions downstream of addA (98 degrees) and citG (289 degrees) in Bacillus subtilis.</title>
        <authorList>
            <person name="Medina N."/>
            <person name="Vannier F."/>
            <person name="Roche B."/>
            <person name="Autret S."/>
            <person name="Levine A."/>
            <person name="Seror S.J."/>
        </authorList>
    </citation>
    <scope>NUCLEOTIDE SEQUENCE [GENOMIC DNA]</scope>
    <source>
        <strain>168</strain>
    </source>
</reference>
<reference key="2">
    <citation type="journal article" date="1997" name="Nature">
        <title>The complete genome sequence of the Gram-positive bacterium Bacillus subtilis.</title>
        <authorList>
            <person name="Kunst F."/>
            <person name="Ogasawara N."/>
            <person name="Moszer I."/>
            <person name="Albertini A.M."/>
            <person name="Alloni G."/>
            <person name="Azevedo V."/>
            <person name="Bertero M.G."/>
            <person name="Bessieres P."/>
            <person name="Bolotin A."/>
            <person name="Borchert S."/>
            <person name="Borriss R."/>
            <person name="Boursier L."/>
            <person name="Brans A."/>
            <person name="Braun M."/>
            <person name="Brignell S.C."/>
            <person name="Bron S."/>
            <person name="Brouillet S."/>
            <person name="Bruschi C.V."/>
            <person name="Caldwell B."/>
            <person name="Capuano V."/>
            <person name="Carter N.M."/>
            <person name="Choi S.-K."/>
            <person name="Codani J.-J."/>
            <person name="Connerton I.F."/>
            <person name="Cummings N.J."/>
            <person name="Daniel R.A."/>
            <person name="Denizot F."/>
            <person name="Devine K.M."/>
            <person name="Duesterhoeft A."/>
            <person name="Ehrlich S.D."/>
            <person name="Emmerson P.T."/>
            <person name="Entian K.-D."/>
            <person name="Errington J."/>
            <person name="Fabret C."/>
            <person name="Ferrari E."/>
            <person name="Foulger D."/>
            <person name="Fritz C."/>
            <person name="Fujita M."/>
            <person name="Fujita Y."/>
            <person name="Fuma S."/>
            <person name="Galizzi A."/>
            <person name="Galleron N."/>
            <person name="Ghim S.-Y."/>
            <person name="Glaser P."/>
            <person name="Goffeau A."/>
            <person name="Golightly E.J."/>
            <person name="Grandi G."/>
            <person name="Guiseppi G."/>
            <person name="Guy B.J."/>
            <person name="Haga K."/>
            <person name="Haiech J."/>
            <person name="Harwood C.R."/>
            <person name="Henaut A."/>
            <person name="Hilbert H."/>
            <person name="Holsappel S."/>
            <person name="Hosono S."/>
            <person name="Hullo M.-F."/>
            <person name="Itaya M."/>
            <person name="Jones L.-M."/>
            <person name="Joris B."/>
            <person name="Karamata D."/>
            <person name="Kasahara Y."/>
            <person name="Klaerr-Blanchard M."/>
            <person name="Klein C."/>
            <person name="Kobayashi Y."/>
            <person name="Koetter P."/>
            <person name="Koningstein G."/>
            <person name="Krogh S."/>
            <person name="Kumano M."/>
            <person name="Kurita K."/>
            <person name="Lapidus A."/>
            <person name="Lardinois S."/>
            <person name="Lauber J."/>
            <person name="Lazarevic V."/>
            <person name="Lee S.-M."/>
            <person name="Levine A."/>
            <person name="Liu H."/>
            <person name="Masuda S."/>
            <person name="Mauel C."/>
            <person name="Medigue C."/>
            <person name="Medina N."/>
            <person name="Mellado R.P."/>
            <person name="Mizuno M."/>
            <person name="Moestl D."/>
            <person name="Nakai S."/>
            <person name="Noback M."/>
            <person name="Noone D."/>
            <person name="O'Reilly M."/>
            <person name="Ogawa K."/>
            <person name="Ogiwara A."/>
            <person name="Oudega B."/>
            <person name="Park S.-H."/>
            <person name="Parro V."/>
            <person name="Pohl T.M."/>
            <person name="Portetelle D."/>
            <person name="Porwollik S."/>
            <person name="Prescott A.M."/>
            <person name="Presecan E."/>
            <person name="Pujic P."/>
            <person name="Purnelle B."/>
            <person name="Rapoport G."/>
            <person name="Rey M."/>
            <person name="Reynolds S."/>
            <person name="Rieger M."/>
            <person name="Rivolta C."/>
            <person name="Rocha E."/>
            <person name="Roche B."/>
            <person name="Rose M."/>
            <person name="Sadaie Y."/>
            <person name="Sato T."/>
            <person name="Scanlan E."/>
            <person name="Schleich S."/>
            <person name="Schroeter R."/>
            <person name="Scoffone F."/>
            <person name="Sekiguchi J."/>
            <person name="Sekowska A."/>
            <person name="Seror S.J."/>
            <person name="Serror P."/>
            <person name="Shin B.-S."/>
            <person name="Soldo B."/>
            <person name="Sorokin A."/>
            <person name="Tacconi E."/>
            <person name="Takagi T."/>
            <person name="Takahashi H."/>
            <person name="Takemaru K."/>
            <person name="Takeuchi M."/>
            <person name="Tamakoshi A."/>
            <person name="Tanaka T."/>
            <person name="Terpstra P."/>
            <person name="Tognoni A."/>
            <person name="Tosato V."/>
            <person name="Uchiyama S."/>
            <person name="Vandenbol M."/>
            <person name="Vannier F."/>
            <person name="Vassarotti A."/>
            <person name="Viari A."/>
            <person name="Wambutt R."/>
            <person name="Wedler E."/>
            <person name="Wedler H."/>
            <person name="Weitzenegger T."/>
            <person name="Winters P."/>
            <person name="Wipat A."/>
            <person name="Yamamoto H."/>
            <person name="Yamane K."/>
            <person name="Yasumoto K."/>
            <person name="Yata K."/>
            <person name="Yoshida K."/>
            <person name="Yoshikawa H.-F."/>
            <person name="Zumstein E."/>
            <person name="Yoshikawa H."/>
            <person name="Danchin A."/>
        </authorList>
    </citation>
    <scope>NUCLEOTIDE SEQUENCE [LARGE SCALE GENOMIC DNA]</scope>
    <source>
        <strain>168</strain>
    </source>
</reference>
<reference key="3">
    <citation type="submission" date="1997-04" db="EMBL/GenBank/DDBJ databases">
        <title>Bacillus subtilis genome project, DNA sequence from yucA to yucH.</title>
        <authorList>
            <person name="Oudega B."/>
            <person name="Koningstein G."/>
            <person name="Duesterhoeft A."/>
        </authorList>
    </citation>
    <scope>NUCLEOTIDE SEQUENCE [GENOMIC DNA] OF 1-115</scope>
    <source>
        <strain>168</strain>
    </source>
</reference>
<feature type="chain" id="PRO_0000049583" description="Uncharacterized protein YisN">
    <location>
        <begin position="1"/>
        <end position="195"/>
    </location>
</feature>
<feature type="sequence conflict" description="In Ref. 3; CAB07964." evidence="1" ref="3">
    <original>E</original>
    <variation>K</variation>
    <location>
        <position position="78"/>
    </location>
</feature>
<proteinExistence type="predicted"/>
<protein>
    <recommendedName>
        <fullName>Uncharacterized protein YisN</fullName>
    </recommendedName>
</protein>
<sequence length="195" mass="22272">MKKKETAWMKRKQLLYTEERKWEYGTILIEDGICLIENGEGDILLADSLQHSPIWIHHKGKWEQAGFQDKLVLACGAENISLSGGERIRYEKSVKRPLMALLDSLDDETFLAFLQHLHSFGLSVFDCVFSYNKGVFSNTSAGQGVSFYHFSNDTAQCAMQHHYNYSSEGTGDRFEWTASNGKRSIMYTAVQRGRK</sequence>
<gene>
    <name type="primary">yisN</name>
    <name type="synonym">yucA</name>
    <name type="ordered locus">BSU10780</name>
</gene>
<accession>O06727</accession>
<accession>O05271</accession>